<name>EFG_HISS2</name>
<organism>
    <name type="scientific">Histophilus somni (strain 2336)</name>
    <name type="common">Haemophilus somnus</name>
    <dbReference type="NCBI Taxonomy" id="228400"/>
    <lineage>
        <taxon>Bacteria</taxon>
        <taxon>Pseudomonadati</taxon>
        <taxon>Pseudomonadota</taxon>
        <taxon>Gammaproteobacteria</taxon>
        <taxon>Pasteurellales</taxon>
        <taxon>Pasteurellaceae</taxon>
        <taxon>Histophilus</taxon>
    </lineage>
</organism>
<feature type="chain" id="PRO_1000074960" description="Elongation factor G">
    <location>
        <begin position="1"/>
        <end position="700"/>
    </location>
</feature>
<feature type="domain" description="tr-type G">
    <location>
        <begin position="8"/>
        <end position="290"/>
    </location>
</feature>
<feature type="binding site" evidence="1">
    <location>
        <begin position="17"/>
        <end position="24"/>
    </location>
    <ligand>
        <name>GTP</name>
        <dbReference type="ChEBI" id="CHEBI:37565"/>
    </ligand>
</feature>
<feature type="binding site" evidence="1">
    <location>
        <begin position="88"/>
        <end position="92"/>
    </location>
    <ligand>
        <name>GTP</name>
        <dbReference type="ChEBI" id="CHEBI:37565"/>
    </ligand>
</feature>
<feature type="binding site" evidence="1">
    <location>
        <begin position="142"/>
        <end position="145"/>
    </location>
    <ligand>
        <name>GTP</name>
        <dbReference type="ChEBI" id="CHEBI:37565"/>
    </ligand>
</feature>
<keyword id="KW-0963">Cytoplasm</keyword>
<keyword id="KW-0251">Elongation factor</keyword>
<keyword id="KW-0342">GTP-binding</keyword>
<keyword id="KW-0547">Nucleotide-binding</keyword>
<keyword id="KW-0648">Protein biosynthesis</keyword>
<dbReference type="EMBL" id="CP000947">
    <property type="protein sequence ID" value="ACA31593.1"/>
    <property type="molecule type" value="Genomic_DNA"/>
</dbReference>
<dbReference type="RefSeq" id="WP_011609790.1">
    <property type="nucleotide sequence ID" value="NC_010519.1"/>
</dbReference>
<dbReference type="SMR" id="B0UWC4"/>
<dbReference type="STRING" id="228400.HSM_1807"/>
<dbReference type="GeneID" id="31488115"/>
<dbReference type="KEGG" id="hsm:HSM_1807"/>
<dbReference type="HOGENOM" id="CLU_002794_4_1_6"/>
<dbReference type="GO" id="GO:0005737">
    <property type="term" value="C:cytoplasm"/>
    <property type="evidence" value="ECO:0007669"/>
    <property type="project" value="UniProtKB-SubCell"/>
</dbReference>
<dbReference type="GO" id="GO:0005525">
    <property type="term" value="F:GTP binding"/>
    <property type="evidence" value="ECO:0007669"/>
    <property type="project" value="UniProtKB-UniRule"/>
</dbReference>
<dbReference type="GO" id="GO:0003924">
    <property type="term" value="F:GTPase activity"/>
    <property type="evidence" value="ECO:0007669"/>
    <property type="project" value="InterPro"/>
</dbReference>
<dbReference type="GO" id="GO:0097216">
    <property type="term" value="F:guanosine tetraphosphate binding"/>
    <property type="evidence" value="ECO:0007669"/>
    <property type="project" value="UniProtKB-ARBA"/>
</dbReference>
<dbReference type="GO" id="GO:0003746">
    <property type="term" value="F:translation elongation factor activity"/>
    <property type="evidence" value="ECO:0007669"/>
    <property type="project" value="UniProtKB-UniRule"/>
</dbReference>
<dbReference type="GO" id="GO:0032790">
    <property type="term" value="P:ribosome disassembly"/>
    <property type="evidence" value="ECO:0007669"/>
    <property type="project" value="TreeGrafter"/>
</dbReference>
<dbReference type="CDD" id="cd01886">
    <property type="entry name" value="EF-G"/>
    <property type="match status" value="1"/>
</dbReference>
<dbReference type="CDD" id="cd16262">
    <property type="entry name" value="EFG_III"/>
    <property type="match status" value="1"/>
</dbReference>
<dbReference type="CDD" id="cd01434">
    <property type="entry name" value="EFG_mtEFG1_IV"/>
    <property type="match status" value="1"/>
</dbReference>
<dbReference type="CDD" id="cd03713">
    <property type="entry name" value="EFG_mtEFG_C"/>
    <property type="match status" value="1"/>
</dbReference>
<dbReference type="CDD" id="cd04088">
    <property type="entry name" value="EFG_mtEFG_II"/>
    <property type="match status" value="1"/>
</dbReference>
<dbReference type="FunFam" id="2.40.30.10:FF:000006">
    <property type="entry name" value="Elongation factor G"/>
    <property type="match status" value="1"/>
</dbReference>
<dbReference type="FunFam" id="3.30.230.10:FF:000003">
    <property type="entry name" value="Elongation factor G"/>
    <property type="match status" value="1"/>
</dbReference>
<dbReference type="FunFam" id="3.30.70.240:FF:000001">
    <property type="entry name" value="Elongation factor G"/>
    <property type="match status" value="1"/>
</dbReference>
<dbReference type="FunFam" id="3.30.70.870:FF:000001">
    <property type="entry name" value="Elongation factor G"/>
    <property type="match status" value="1"/>
</dbReference>
<dbReference type="FunFam" id="3.40.50.300:FF:000029">
    <property type="entry name" value="Elongation factor G"/>
    <property type="match status" value="1"/>
</dbReference>
<dbReference type="Gene3D" id="3.30.230.10">
    <property type="match status" value="1"/>
</dbReference>
<dbReference type="Gene3D" id="3.30.70.240">
    <property type="match status" value="1"/>
</dbReference>
<dbReference type="Gene3D" id="3.30.70.870">
    <property type="entry name" value="Elongation Factor G (Translational Gtpase), domain 3"/>
    <property type="match status" value="1"/>
</dbReference>
<dbReference type="Gene3D" id="3.40.50.300">
    <property type="entry name" value="P-loop containing nucleotide triphosphate hydrolases"/>
    <property type="match status" value="1"/>
</dbReference>
<dbReference type="Gene3D" id="2.40.30.10">
    <property type="entry name" value="Translation factors"/>
    <property type="match status" value="1"/>
</dbReference>
<dbReference type="HAMAP" id="MF_00054_B">
    <property type="entry name" value="EF_G_EF_2_B"/>
    <property type="match status" value="1"/>
</dbReference>
<dbReference type="InterPro" id="IPR041095">
    <property type="entry name" value="EFG_II"/>
</dbReference>
<dbReference type="InterPro" id="IPR009022">
    <property type="entry name" value="EFG_III"/>
</dbReference>
<dbReference type="InterPro" id="IPR035647">
    <property type="entry name" value="EFG_III/V"/>
</dbReference>
<dbReference type="InterPro" id="IPR047872">
    <property type="entry name" value="EFG_IV"/>
</dbReference>
<dbReference type="InterPro" id="IPR035649">
    <property type="entry name" value="EFG_V"/>
</dbReference>
<dbReference type="InterPro" id="IPR000640">
    <property type="entry name" value="EFG_V-like"/>
</dbReference>
<dbReference type="InterPro" id="IPR004161">
    <property type="entry name" value="EFTu-like_2"/>
</dbReference>
<dbReference type="InterPro" id="IPR031157">
    <property type="entry name" value="G_TR_CS"/>
</dbReference>
<dbReference type="InterPro" id="IPR027417">
    <property type="entry name" value="P-loop_NTPase"/>
</dbReference>
<dbReference type="InterPro" id="IPR020568">
    <property type="entry name" value="Ribosomal_Su5_D2-typ_SF"/>
</dbReference>
<dbReference type="InterPro" id="IPR014721">
    <property type="entry name" value="Ribsml_uS5_D2-typ_fold_subgr"/>
</dbReference>
<dbReference type="InterPro" id="IPR005225">
    <property type="entry name" value="Small_GTP-bd"/>
</dbReference>
<dbReference type="InterPro" id="IPR000795">
    <property type="entry name" value="T_Tr_GTP-bd_dom"/>
</dbReference>
<dbReference type="InterPro" id="IPR009000">
    <property type="entry name" value="Transl_B-barrel_sf"/>
</dbReference>
<dbReference type="InterPro" id="IPR004540">
    <property type="entry name" value="Transl_elong_EFG/EF2"/>
</dbReference>
<dbReference type="InterPro" id="IPR005517">
    <property type="entry name" value="Transl_elong_EFG/EF2_IV"/>
</dbReference>
<dbReference type="NCBIfam" id="TIGR00484">
    <property type="entry name" value="EF-G"/>
    <property type="match status" value="1"/>
</dbReference>
<dbReference type="NCBIfam" id="NF009381">
    <property type="entry name" value="PRK12740.1-5"/>
    <property type="match status" value="1"/>
</dbReference>
<dbReference type="NCBIfam" id="TIGR00231">
    <property type="entry name" value="small_GTP"/>
    <property type="match status" value="1"/>
</dbReference>
<dbReference type="PANTHER" id="PTHR43261:SF1">
    <property type="entry name" value="RIBOSOME-RELEASING FACTOR 2, MITOCHONDRIAL"/>
    <property type="match status" value="1"/>
</dbReference>
<dbReference type="PANTHER" id="PTHR43261">
    <property type="entry name" value="TRANSLATION ELONGATION FACTOR G-RELATED"/>
    <property type="match status" value="1"/>
</dbReference>
<dbReference type="Pfam" id="PF00679">
    <property type="entry name" value="EFG_C"/>
    <property type="match status" value="1"/>
</dbReference>
<dbReference type="Pfam" id="PF14492">
    <property type="entry name" value="EFG_III"/>
    <property type="match status" value="1"/>
</dbReference>
<dbReference type="Pfam" id="PF03764">
    <property type="entry name" value="EFG_IV"/>
    <property type="match status" value="1"/>
</dbReference>
<dbReference type="Pfam" id="PF00009">
    <property type="entry name" value="GTP_EFTU"/>
    <property type="match status" value="1"/>
</dbReference>
<dbReference type="Pfam" id="PF03144">
    <property type="entry name" value="GTP_EFTU_D2"/>
    <property type="match status" value="1"/>
</dbReference>
<dbReference type="PRINTS" id="PR00315">
    <property type="entry name" value="ELONGATNFCT"/>
</dbReference>
<dbReference type="SMART" id="SM00838">
    <property type="entry name" value="EFG_C"/>
    <property type="match status" value="1"/>
</dbReference>
<dbReference type="SMART" id="SM00889">
    <property type="entry name" value="EFG_IV"/>
    <property type="match status" value="1"/>
</dbReference>
<dbReference type="SUPFAM" id="SSF54980">
    <property type="entry name" value="EF-G C-terminal domain-like"/>
    <property type="match status" value="2"/>
</dbReference>
<dbReference type="SUPFAM" id="SSF52540">
    <property type="entry name" value="P-loop containing nucleoside triphosphate hydrolases"/>
    <property type="match status" value="1"/>
</dbReference>
<dbReference type="SUPFAM" id="SSF54211">
    <property type="entry name" value="Ribosomal protein S5 domain 2-like"/>
    <property type="match status" value="1"/>
</dbReference>
<dbReference type="SUPFAM" id="SSF50447">
    <property type="entry name" value="Translation proteins"/>
    <property type="match status" value="1"/>
</dbReference>
<dbReference type="PROSITE" id="PS00301">
    <property type="entry name" value="G_TR_1"/>
    <property type="match status" value="1"/>
</dbReference>
<dbReference type="PROSITE" id="PS51722">
    <property type="entry name" value="G_TR_2"/>
    <property type="match status" value="1"/>
</dbReference>
<reference key="1">
    <citation type="submission" date="2008-02" db="EMBL/GenBank/DDBJ databases">
        <title>Complete sequence of Haemophilus somnus 2336.</title>
        <authorList>
            <consortium name="US DOE Joint Genome Institute"/>
            <person name="Siddaramappa S."/>
            <person name="Duncan A.J."/>
            <person name="Challacombe J.F."/>
            <person name="Rainey D."/>
            <person name="Gillaspy A.F."/>
            <person name="Carson M."/>
            <person name="Gipson J."/>
            <person name="Gipson M."/>
            <person name="Bruce D."/>
            <person name="Detter J.C."/>
            <person name="Han C.S."/>
            <person name="Land M."/>
            <person name="Tapia R."/>
            <person name="Thompson L.S."/>
            <person name="Orvis J."/>
            <person name="Zaitshik J."/>
            <person name="Barnes G."/>
            <person name="Brettin T.S."/>
            <person name="Dyer D.W."/>
            <person name="Inzana T.J."/>
        </authorList>
    </citation>
    <scope>NUCLEOTIDE SEQUENCE [LARGE SCALE GENOMIC DNA]</scope>
    <source>
        <strain>2336</strain>
    </source>
</reference>
<comment type="function">
    <text evidence="1">Catalyzes the GTP-dependent ribosomal translocation step during translation elongation. During this step, the ribosome changes from the pre-translocational (PRE) to the post-translocational (POST) state as the newly formed A-site-bound peptidyl-tRNA and P-site-bound deacylated tRNA move to the P and E sites, respectively. Catalyzes the coordinated movement of the two tRNA molecules, the mRNA and conformational changes in the ribosome.</text>
</comment>
<comment type="subcellular location">
    <subcellularLocation>
        <location evidence="1">Cytoplasm</location>
    </subcellularLocation>
</comment>
<comment type="similarity">
    <text evidence="1">Belongs to the TRAFAC class translation factor GTPase superfamily. Classic translation factor GTPase family. EF-G/EF-2 subfamily.</text>
</comment>
<accession>B0UWC4</accession>
<protein>
    <recommendedName>
        <fullName evidence="1">Elongation factor G</fullName>
        <shortName evidence="1">EF-G</shortName>
    </recommendedName>
</protein>
<sequence>MARTTPISLYRNIGISAHIDAGKTTTTERILFYTGVSHKIGEVHDGAATMDWMEQEQERGITITSAATTAFWSGMSQQFPQHRINVIDTPGHVDFTIEVERSMRVLDGAVMVYCAVGGVQPQSETVWRQANKYKVPRIAFVNKMDRTGANFLRVVEQIKTRLGGNAVPLQLPIGAEDNFKGVVDLIKMKAINWNEADQGMTFTYEDIPAEMLAECEKWRANLVEAAAESSDELMDKFFSGDELTEEEIKKGLRLRALKTEIILVTCGSAFKNKGVQAMLDAVIDYLPAPTDIEAIKGINPDETEGERHASDDEPFAALAFKIATDPFVGNLTFFRVYSGVVESGATVLNSVKDKRERFGRIVQMHANKREEIKEVRAGDIAAAIGLKDVGTGDTLCAMDAPIILERMEFPEPVISVAVEPKTKADQEKMGLALGRLAQEDPSFRVHTDEESGETIISGMGELHLDIIVDRMRREFKVEANIGKPQVSYRETIRTRVNDVEGKHAKQSGGRGQYGHVVIDLYPLEPEGPGYEFVNEIKGGVIPGEYIPAVDKGIQEQLKSGPLAGYPVVDLGVRLHFGSYHDVDSSELAFKLAASLAFKAAFNKANPVLLEPIMKVEVETPPDYVGDVIGDLSRRRAMVSGQEANEFVVKINAEVPLAEMFGYATDLRSQTQGRASYSMEPLKYAEAPKNVADAVIEARKK</sequence>
<evidence type="ECO:0000255" key="1">
    <source>
        <dbReference type="HAMAP-Rule" id="MF_00054"/>
    </source>
</evidence>
<gene>
    <name evidence="1" type="primary">fusA</name>
    <name type="ordered locus">HSM_1807</name>
</gene>
<proteinExistence type="inferred from homology"/>